<gene>
    <name evidence="1" type="primary">rpmI</name>
    <name type="ordered locus">ABAYE3164</name>
</gene>
<dbReference type="EMBL" id="CU459141">
    <property type="protein sequence ID" value="CAM87973.1"/>
    <property type="molecule type" value="Genomic_DNA"/>
</dbReference>
<dbReference type="RefSeq" id="WP_001096359.1">
    <property type="nucleotide sequence ID" value="NZ_JBDGFB010000020.1"/>
</dbReference>
<dbReference type="SMR" id="B0V5N7"/>
<dbReference type="EnsemblBacteria" id="CAM87973">
    <property type="protein sequence ID" value="CAM87973"/>
    <property type="gene ID" value="ABAYE3164"/>
</dbReference>
<dbReference type="GeneID" id="92892575"/>
<dbReference type="KEGG" id="aby:ABAYE3164"/>
<dbReference type="HOGENOM" id="CLU_169643_1_1_6"/>
<dbReference type="GO" id="GO:0022625">
    <property type="term" value="C:cytosolic large ribosomal subunit"/>
    <property type="evidence" value="ECO:0007669"/>
    <property type="project" value="TreeGrafter"/>
</dbReference>
<dbReference type="GO" id="GO:0003735">
    <property type="term" value="F:structural constituent of ribosome"/>
    <property type="evidence" value="ECO:0007669"/>
    <property type="project" value="InterPro"/>
</dbReference>
<dbReference type="GO" id="GO:0006412">
    <property type="term" value="P:translation"/>
    <property type="evidence" value="ECO:0007669"/>
    <property type="project" value="UniProtKB-UniRule"/>
</dbReference>
<dbReference type="FunFam" id="4.10.410.60:FF:000001">
    <property type="entry name" value="50S ribosomal protein L35"/>
    <property type="match status" value="1"/>
</dbReference>
<dbReference type="Gene3D" id="4.10.410.60">
    <property type="match status" value="1"/>
</dbReference>
<dbReference type="HAMAP" id="MF_00514">
    <property type="entry name" value="Ribosomal_bL35"/>
    <property type="match status" value="1"/>
</dbReference>
<dbReference type="InterPro" id="IPR001706">
    <property type="entry name" value="Ribosomal_bL35"/>
</dbReference>
<dbReference type="InterPro" id="IPR021137">
    <property type="entry name" value="Ribosomal_bL35-like"/>
</dbReference>
<dbReference type="InterPro" id="IPR018265">
    <property type="entry name" value="Ribosomal_bL35_CS"/>
</dbReference>
<dbReference type="InterPro" id="IPR037229">
    <property type="entry name" value="Ribosomal_bL35_sf"/>
</dbReference>
<dbReference type="NCBIfam" id="TIGR00001">
    <property type="entry name" value="rpmI_bact"/>
    <property type="match status" value="1"/>
</dbReference>
<dbReference type="PANTHER" id="PTHR33343">
    <property type="entry name" value="54S RIBOSOMAL PROTEIN BL35M"/>
    <property type="match status" value="1"/>
</dbReference>
<dbReference type="PANTHER" id="PTHR33343:SF1">
    <property type="entry name" value="LARGE RIBOSOMAL SUBUNIT PROTEIN BL35M"/>
    <property type="match status" value="1"/>
</dbReference>
<dbReference type="Pfam" id="PF01632">
    <property type="entry name" value="Ribosomal_L35p"/>
    <property type="match status" value="1"/>
</dbReference>
<dbReference type="PRINTS" id="PR00064">
    <property type="entry name" value="RIBOSOMALL35"/>
</dbReference>
<dbReference type="SUPFAM" id="SSF143034">
    <property type="entry name" value="L35p-like"/>
    <property type="match status" value="1"/>
</dbReference>
<dbReference type="PROSITE" id="PS00936">
    <property type="entry name" value="RIBOSOMAL_L35"/>
    <property type="match status" value="1"/>
</dbReference>
<proteinExistence type="inferred from homology"/>
<name>RL35_ACIBY</name>
<keyword id="KW-0687">Ribonucleoprotein</keyword>
<keyword id="KW-0689">Ribosomal protein</keyword>
<organism>
    <name type="scientific">Acinetobacter baumannii (strain AYE)</name>
    <dbReference type="NCBI Taxonomy" id="509173"/>
    <lineage>
        <taxon>Bacteria</taxon>
        <taxon>Pseudomonadati</taxon>
        <taxon>Pseudomonadota</taxon>
        <taxon>Gammaproteobacteria</taxon>
        <taxon>Moraxellales</taxon>
        <taxon>Moraxellaceae</taxon>
        <taxon>Acinetobacter</taxon>
        <taxon>Acinetobacter calcoaceticus/baumannii complex</taxon>
    </lineage>
</organism>
<evidence type="ECO:0000255" key="1">
    <source>
        <dbReference type="HAMAP-Rule" id="MF_00514"/>
    </source>
</evidence>
<evidence type="ECO:0000305" key="2"/>
<protein>
    <recommendedName>
        <fullName evidence="1">Large ribosomal subunit protein bL35</fullName>
    </recommendedName>
    <alternativeName>
        <fullName evidence="2">50S ribosomal protein L35</fullName>
    </alternativeName>
</protein>
<accession>B0V5N7</accession>
<feature type="chain" id="PRO_1000127294" description="Large ribosomal subunit protein bL35">
    <location>
        <begin position="1"/>
        <end position="64"/>
    </location>
</feature>
<comment type="similarity">
    <text evidence="1">Belongs to the bacterial ribosomal protein bL35 family.</text>
</comment>
<sequence length="64" mass="7402">MAKLKTRRGAAKRFKATANGFKRKQAFKRHILTKKSAKRIRQLRGCVMVHVSDVASVRRMCPYI</sequence>
<reference key="1">
    <citation type="journal article" date="2008" name="PLoS ONE">
        <title>Comparative analysis of Acinetobacters: three genomes for three lifestyles.</title>
        <authorList>
            <person name="Vallenet D."/>
            <person name="Nordmann P."/>
            <person name="Barbe V."/>
            <person name="Poirel L."/>
            <person name="Mangenot S."/>
            <person name="Bataille E."/>
            <person name="Dossat C."/>
            <person name="Gas S."/>
            <person name="Kreimeyer A."/>
            <person name="Lenoble P."/>
            <person name="Oztas S."/>
            <person name="Poulain J."/>
            <person name="Segurens B."/>
            <person name="Robert C."/>
            <person name="Abergel C."/>
            <person name="Claverie J.-M."/>
            <person name="Raoult D."/>
            <person name="Medigue C."/>
            <person name="Weissenbach J."/>
            <person name="Cruveiller S."/>
        </authorList>
    </citation>
    <scope>NUCLEOTIDE SEQUENCE [LARGE SCALE GENOMIC DNA]</scope>
    <source>
        <strain>AYE</strain>
    </source>
</reference>